<proteinExistence type="inferred from homology"/>
<accession>B1XCS8</accession>
<organism>
    <name type="scientific">Escherichia coli (strain K12 / DH10B)</name>
    <dbReference type="NCBI Taxonomy" id="316385"/>
    <lineage>
        <taxon>Bacteria</taxon>
        <taxon>Pseudomonadati</taxon>
        <taxon>Pseudomonadota</taxon>
        <taxon>Gammaproteobacteria</taxon>
        <taxon>Enterobacterales</taxon>
        <taxon>Enterobacteriaceae</taxon>
        <taxon>Escherichia</taxon>
    </lineage>
</organism>
<evidence type="ECO:0000255" key="1">
    <source>
        <dbReference type="HAMAP-Rule" id="MF_00064"/>
    </source>
</evidence>
<dbReference type="EC" id="2.7.7.4" evidence="1"/>
<dbReference type="EMBL" id="CP000948">
    <property type="protein sequence ID" value="ACB03869.1"/>
    <property type="molecule type" value="Genomic_DNA"/>
</dbReference>
<dbReference type="RefSeq" id="WP_000372108.1">
    <property type="nucleotide sequence ID" value="NC_010473.1"/>
</dbReference>
<dbReference type="SMR" id="B1XCS8"/>
<dbReference type="GeneID" id="93779254"/>
<dbReference type="KEGG" id="ecd:ECDH10B_2920"/>
<dbReference type="HOGENOM" id="CLU_043026_0_0_6"/>
<dbReference type="UniPathway" id="UPA00140">
    <property type="reaction ID" value="UER00204"/>
</dbReference>
<dbReference type="GO" id="GO:0005524">
    <property type="term" value="F:ATP binding"/>
    <property type="evidence" value="ECO:0007669"/>
    <property type="project" value="UniProtKB-KW"/>
</dbReference>
<dbReference type="GO" id="GO:0004781">
    <property type="term" value="F:sulfate adenylyltransferase (ATP) activity"/>
    <property type="evidence" value="ECO:0007669"/>
    <property type="project" value="UniProtKB-UniRule"/>
</dbReference>
<dbReference type="GO" id="GO:0070814">
    <property type="term" value="P:hydrogen sulfide biosynthetic process"/>
    <property type="evidence" value="ECO:0007669"/>
    <property type="project" value="UniProtKB-UniRule"/>
</dbReference>
<dbReference type="GO" id="GO:0000103">
    <property type="term" value="P:sulfate assimilation"/>
    <property type="evidence" value="ECO:0007669"/>
    <property type="project" value="UniProtKB-UniRule"/>
</dbReference>
<dbReference type="CDD" id="cd23946">
    <property type="entry name" value="Sulfate_adenylyltransferase_2"/>
    <property type="match status" value="1"/>
</dbReference>
<dbReference type="FunFam" id="3.40.50.620:FF:000002">
    <property type="entry name" value="Sulfate adenylyltransferase subunit 2"/>
    <property type="match status" value="1"/>
</dbReference>
<dbReference type="Gene3D" id="3.40.50.620">
    <property type="entry name" value="HUPs"/>
    <property type="match status" value="1"/>
</dbReference>
<dbReference type="HAMAP" id="MF_00064">
    <property type="entry name" value="Sulf_adenylyltr_sub2"/>
    <property type="match status" value="1"/>
</dbReference>
<dbReference type="InterPro" id="IPR002500">
    <property type="entry name" value="PAPS_reduct_dom"/>
</dbReference>
<dbReference type="InterPro" id="IPR014729">
    <property type="entry name" value="Rossmann-like_a/b/a_fold"/>
</dbReference>
<dbReference type="InterPro" id="IPR011784">
    <property type="entry name" value="SO4_adenylTrfase_ssu"/>
</dbReference>
<dbReference type="InterPro" id="IPR050128">
    <property type="entry name" value="Sulfate_adenylyltrnsfr_sub2"/>
</dbReference>
<dbReference type="NCBIfam" id="TIGR02039">
    <property type="entry name" value="CysD"/>
    <property type="match status" value="1"/>
</dbReference>
<dbReference type="NCBIfam" id="NF003587">
    <property type="entry name" value="PRK05253.1"/>
    <property type="match status" value="1"/>
</dbReference>
<dbReference type="NCBIfam" id="NF009214">
    <property type="entry name" value="PRK12563.1"/>
    <property type="match status" value="1"/>
</dbReference>
<dbReference type="PANTHER" id="PTHR43196">
    <property type="entry name" value="SULFATE ADENYLYLTRANSFERASE SUBUNIT 2"/>
    <property type="match status" value="1"/>
</dbReference>
<dbReference type="PANTHER" id="PTHR43196:SF1">
    <property type="entry name" value="SULFATE ADENYLYLTRANSFERASE SUBUNIT 2"/>
    <property type="match status" value="1"/>
</dbReference>
<dbReference type="Pfam" id="PF01507">
    <property type="entry name" value="PAPS_reduct"/>
    <property type="match status" value="1"/>
</dbReference>
<dbReference type="PIRSF" id="PIRSF002936">
    <property type="entry name" value="CysDAde_trans"/>
    <property type="match status" value="1"/>
</dbReference>
<dbReference type="SUPFAM" id="SSF52402">
    <property type="entry name" value="Adenine nucleotide alpha hydrolases-like"/>
    <property type="match status" value="1"/>
</dbReference>
<reference key="1">
    <citation type="journal article" date="2008" name="J. Bacteriol.">
        <title>The complete genome sequence of Escherichia coli DH10B: insights into the biology of a laboratory workhorse.</title>
        <authorList>
            <person name="Durfee T."/>
            <person name="Nelson R."/>
            <person name="Baldwin S."/>
            <person name="Plunkett G. III"/>
            <person name="Burland V."/>
            <person name="Mau B."/>
            <person name="Petrosino J.F."/>
            <person name="Qin X."/>
            <person name="Muzny D.M."/>
            <person name="Ayele M."/>
            <person name="Gibbs R.A."/>
            <person name="Csorgo B."/>
            <person name="Posfai G."/>
            <person name="Weinstock G.M."/>
            <person name="Blattner F.R."/>
        </authorList>
    </citation>
    <scope>NUCLEOTIDE SEQUENCE [LARGE SCALE GENOMIC DNA]</scope>
    <source>
        <strain>K12 / DH10B</strain>
    </source>
</reference>
<sequence>MDQIRLTHLRQLEAESIHIIREVAAEFSNPVMLYSIGKDSSVMLHLARKAFYPGTLPFPLLHVDTGWKFREMYEFRDRTAKAYGCELLVHKNPEGVAMGINPFVHGSAKHTDIMKTEGLKQALNKYGFDAAFGGARRDEEKSRAKERIYSFRDRFHRWDPKNQRPELWHNYNGQINKGESIRVFPLSNWTEQDIWQYIWLENIDIVPLYLAAERPVLERDGMLMMIDDNRIDLQPGEVIKKRMVRFRTLGCWPLTGAVESNAQTLPEIIEEMLVSTTSERQGRVIDRDQAGSMELKKRQGYF</sequence>
<comment type="function">
    <text evidence="1">With CysN forms the ATP sulfurylase (ATPS) that catalyzes the adenylation of sulfate producing adenosine 5'-phosphosulfate (APS) and diphosphate, the first enzymatic step in sulfur assimilation pathway. APS synthesis involves the formation of a high-energy phosphoric-sulfuric acid anhydride bond driven by GTP hydrolysis by CysN coupled to ATP hydrolysis by CysD.</text>
</comment>
<comment type="catalytic activity">
    <reaction evidence="1">
        <text>sulfate + ATP + H(+) = adenosine 5'-phosphosulfate + diphosphate</text>
        <dbReference type="Rhea" id="RHEA:18133"/>
        <dbReference type="ChEBI" id="CHEBI:15378"/>
        <dbReference type="ChEBI" id="CHEBI:16189"/>
        <dbReference type="ChEBI" id="CHEBI:30616"/>
        <dbReference type="ChEBI" id="CHEBI:33019"/>
        <dbReference type="ChEBI" id="CHEBI:58243"/>
        <dbReference type="EC" id="2.7.7.4"/>
    </reaction>
</comment>
<comment type="pathway">
    <text evidence="1">Sulfur metabolism; hydrogen sulfide biosynthesis; sulfite from sulfate: step 1/3.</text>
</comment>
<comment type="subunit">
    <text evidence="1">Heterodimer composed of CysD, the smaller subunit, and CysN.</text>
</comment>
<comment type="similarity">
    <text evidence="1">Belongs to the PAPS reductase family. CysD subfamily.</text>
</comment>
<keyword id="KW-0067">ATP-binding</keyword>
<keyword id="KW-0547">Nucleotide-binding</keyword>
<keyword id="KW-0548">Nucleotidyltransferase</keyword>
<keyword id="KW-0808">Transferase</keyword>
<name>CYSD_ECODH</name>
<gene>
    <name evidence="1" type="primary">cysD</name>
    <name type="ordered locus">ECDH10B_2920</name>
</gene>
<protein>
    <recommendedName>
        <fullName evidence="1">Sulfate adenylyltransferase subunit 2</fullName>
        <ecNumber evidence="1">2.7.7.4</ecNumber>
    </recommendedName>
    <alternativeName>
        <fullName evidence="1">ATP-sulfurylase small subunit</fullName>
    </alternativeName>
    <alternativeName>
        <fullName evidence="1">Sulfate adenylate transferase</fullName>
        <shortName evidence="1">SAT</shortName>
    </alternativeName>
</protein>
<feature type="chain" id="PRO_1000092202" description="Sulfate adenylyltransferase subunit 2">
    <location>
        <begin position="1"/>
        <end position="302"/>
    </location>
</feature>